<reference key="1">
    <citation type="journal article" date="2001" name="Lancet">
        <title>Whole genome sequencing of meticillin-resistant Staphylococcus aureus.</title>
        <authorList>
            <person name="Kuroda M."/>
            <person name="Ohta T."/>
            <person name="Uchiyama I."/>
            <person name="Baba T."/>
            <person name="Yuzawa H."/>
            <person name="Kobayashi I."/>
            <person name="Cui L."/>
            <person name="Oguchi A."/>
            <person name="Aoki K."/>
            <person name="Nagai Y."/>
            <person name="Lian J.-Q."/>
            <person name="Ito T."/>
            <person name="Kanamori M."/>
            <person name="Matsumaru H."/>
            <person name="Maruyama A."/>
            <person name="Murakami H."/>
            <person name="Hosoyama A."/>
            <person name="Mizutani-Ui Y."/>
            <person name="Takahashi N.K."/>
            <person name="Sawano T."/>
            <person name="Inoue R."/>
            <person name="Kaito C."/>
            <person name="Sekimizu K."/>
            <person name="Hirakawa H."/>
            <person name="Kuhara S."/>
            <person name="Goto S."/>
            <person name="Yabuzaki J."/>
            <person name="Kanehisa M."/>
            <person name="Yamashita A."/>
            <person name="Oshima K."/>
            <person name="Furuya K."/>
            <person name="Yoshino C."/>
            <person name="Shiba T."/>
            <person name="Hattori M."/>
            <person name="Ogasawara N."/>
            <person name="Hayashi H."/>
            <person name="Hiramatsu K."/>
        </authorList>
    </citation>
    <scope>NUCLEOTIDE SEQUENCE [LARGE SCALE GENOMIC DNA]</scope>
    <source>
        <strain>N315</strain>
    </source>
</reference>
<reference key="2">
    <citation type="submission" date="2007-10" db="UniProtKB">
        <title>Shotgun proteomic analysis of total and membrane protein extracts of S. aureus strain N315.</title>
        <authorList>
            <person name="Vaezzadeh A.R."/>
            <person name="Deshusses J."/>
            <person name="Lescuyer P."/>
            <person name="Hochstrasser D.F."/>
        </authorList>
    </citation>
    <scope>IDENTIFICATION BY MASS SPECTROMETRY [LARGE SCALE ANALYSIS]</scope>
    <source>
        <strain>N315</strain>
    </source>
</reference>
<accession>P64235</accession>
<accession>Q99UM0</accession>
<name>TRMFO_STAAN</name>
<protein>
    <recommendedName>
        <fullName evidence="1">Methylenetetrahydrofolate--tRNA-(uracil-5-)-methyltransferase TrmFO</fullName>
        <ecNumber evidence="1">2.1.1.74</ecNumber>
    </recommendedName>
    <alternativeName>
        <fullName evidence="1">Folate-dependent tRNA (uracil-5-)-methyltransferase</fullName>
    </alternativeName>
    <alternativeName>
        <fullName evidence="1">Folate-dependent tRNA(M-5-U54)-methyltransferase</fullName>
    </alternativeName>
</protein>
<organism>
    <name type="scientific">Staphylococcus aureus (strain N315)</name>
    <dbReference type="NCBI Taxonomy" id="158879"/>
    <lineage>
        <taxon>Bacteria</taxon>
        <taxon>Bacillati</taxon>
        <taxon>Bacillota</taxon>
        <taxon>Bacilli</taxon>
        <taxon>Bacillales</taxon>
        <taxon>Staphylococcaceae</taxon>
        <taxon>Staphylococcus</taxon>
    </lineage>
</organism>
<dbReference type="EC" id="2.1.1.74" evidence="1"/>
<dbReference type="EMBL" id="BA000018">
    <property type="protein sequence ID" value="BAB42346.1"/>
    <property type="molecule type" value="Genomic_DNA"/>
</dbReference>
<dbReference type="PIR" id="F89898">
    <property type="entry name" value="F89898"/>
</dbReference>
<dbReference type="RefSeq" id="WP_000195254.1">
    <property type="nucleotide sequence ID" value="NC_002745.2"/>
</dbReference>
<dbReference type="SMR" id="P64235"/>
<dbReference type="EnsemblBacteria" id="BAB42346">
    <property type="protein sequence ID" value="BAB42346"/>
    <property type="gene ID" value="BAB42346"/>
</dbReference>
<dbReference type="KEGG" id="sau:SA1094"/>
<dbReference type="HOGENOM" id="CLU_033057_1_0_9"/>
<dbReference type="GO" id="GO:0005829">
    <property type="term" value="C:cytosol"/>
    <property type="evidence" value="ECO:0007669"/>
    <property type="project" value="TreeGrafter"/>
</dbReference>
<dbReference type="GO" id="GO:0050660">
    <property type="term" value="F:flavin adenine dinucleotide binding"/>
    <property type="evidence" value="ECO:0007669"/>
    <property type="project" value="UniProtKB-UniRule"/>
</dbReference>
<dbReference type="GO" id="GO:0047151">
    <property type="term" value="F:tRNA (uracil(54)-C5)-methyltransferase activity, 5,10-methylenetetrahydrofolate-dependent"/>
    <property type="evidence" value="ECO:0007669"/>
    <property type="project" value="UniProtKB-UniRule"/>
</dbReference>
<dbReference type="GO" id="GO:0030488">
    <property type="term" value="P:tRNA methylation"/>
    <property type="evidence" value="ECO:0007669"/>
    <property type="project" value="TreeGrafter"/>
</dbReference>
<dbReference type="GO" id="GO:0002098">
    <property type="term" value="P:tRNA wobble uridine modification"/>
    <property type="evidence" value="ECO:0007669"/>
    <property type="project" value="TreeGrafter"/>
</dbReference>
<dbReference type="FunFam" id="3.50.50.60:FF:000035">
    <property type="entry name" value="Methylenetetrahydrofolate--tRNA-(uracil-5-)-methyltransferase TrmFO"/>
    <property type="match status" value="1"/>
</dbReference>
<dbReference type="FunFam" id="3.50.50.60:FF:000040">
    <property type="entry name" value="Methylenetetrahydrofolate--tRNA-(uracil-5-)-methyltransferase TrmFO"/>
    <property type="match status" value="1"/>
</dbReference>
<dbReference type="Gene3D" id="3.50.50.60">
    <property type="entry name" value="FAD/NAD(P)-binding domain"/>
    <property type="match status" value="2"/>
</dbReference>
<dbReference type="HAMAP" id="MF_01037">
    <property type="entry name" value="TrmFO"/>
    <property type="match status" value="1"/>
</dbReference>
<dbReference type="InterPro" id="IPR036188">
    <property type="entry name" value="FAD/NAD-bd_sf"/>
</dbReference>
<dbReference type="InterPro" id="IPR002218">
    <property type="entry name" value="MnmG-rel"/>
</dbReference>
<dbReference type="InterPro" id="IPR020595">
    <property type="entry name" value="MnmG-rel_CS"/>
</dbReference>
<dbReference type="InterPro" id="IPR040131">
    <property type="entry name" value="MnmG_N"/>
</dbReference>
<dbReference type="InterPro" id="IPR004417">
    <property type="entry name" value="TrmFO"/>
</dbReference>
<dbReference type="NCBIfam" id="TIGR00137">
    <property type="entry name" value="gid_trmFO"/>
    <property type="match status" value="1"/>
</dbReference>
<dbReference type="NCBIfam" id="NF003739">
    <property type="entry name" value="PRK05335.1"/>
    <property type="match status" value="1"/>
</dbReference>
<dbReference type="PANTHER" id="PTHR11806">
    <property type="entry name" value="GLUCOSE INHIBITED DIVISION PROTEIN A"/>
    <property type="match status" value="1"/>
</dbReference>
<dbReference type="PANTHER" id="PTHR11806:SF2">
    <property type="entry name" value="METHYLENETETRAHYDROFOLATE--TRNA-(URACIL-5-)-METHYLTRANSFERASE TRMFO"/>
    <property type="match status" value="1"/>
</dbReference>
<dbReference type="Pfam" id="PF01134">
    <property type="entry name" value="GIDA"/>
    <property type="match status" value="1"/>
</dbReference>
<dbReference type="SUPFAM" id="SSF51905">
    <property type="entry name" value="FAD/NAD(P)-binding domain"/>
    <property type="match status" value="1"/>
</dbReference>
<dbReference type="PROSITE" id="PS01281">
    <property type="entry name" value="GIDA_2"/>
    <property type="match status" value="1"/>
</dbReference>
<gene>
    <name evidence="1" type="primary">trmFO</name>
    <name type="synonym">gid</name>
    <name type="ordered locus">SA1094</name>
</gene>
<comment type="function">
    <text evidence="1">Catalyzes the folate-dependent formation of 5-methyl-uridine at position 54 (M-5-U54) in all tRNAs.</text>
</comment>
<comment type="catalytic activity">
    <reaction evidence="1">
        <text>uridine(54) in tRNA + (6R)-5,10-methylene-5,6,7,8-tetrahydrofolate + NADH + H(+) = 5-methyluridine(54) in tRNA + (6S)-5,6,7,8-tetrahydrofolate + NAD(+)</text>
        <dbReference type="Rhea" id="RHEA:16873"/>
        <dbReference type="Rhea" id="RHEA-COMP:10167"/>
        <dbReference type="Rhea" id="RHEA-COMP:10193"/>
        <dbReference type="ChEBI" id="CHEBI:15378"/>
        <dbReference type="ChEBI" id="CHEBI:15636"/>
        <dbReference type="ChEBI" id="CHEBI:57453"/>
        <dbReference type="ChEBI" id="CHEBI:57540"/>
        <dbReference type="ChEBI" id="CHEBI:57945"/>
        <dbReference type="ChEBI" id="CHEBI:65315"/>
        <dbReference type="ChEBI" id="CHEBI:74447"/>
        <dbReference type="EC" id="2.1.1.74"/>
    </reaction>
</comment>
<comment type="catalytic activity">
    <reaction evidence="1">
        <text>uridine(54) in tRNA + (6R)-5,10-methylene-5,6,7,8-tetrahydrofolate + NADPH + H(+) = 5-methyluridine(54) in tRNA + (6S)-5,6,7,8-tetrahydrofolate + NADP(+)</text>
        <dbReference type="Rhea" id="RHEA:62372"/>
        <dbReference type="Rhea" id="RHEA-COMP:10167"/>
        <dbReference type="Rhea" id="RHEA-COMP:10193"/>
        <dbReference type="ChEBI" id="CHEBI:15378"/>
        <dbReference type="ChEBI" id="CHEBI:15636"/>
        <dbReference type="ChEBI" id="CHEBI:57453"/>
        <dbReference type="ChEBI" id="CHEBI:57783"/>
        <dbReference type="ChEBI" id="CHEBI:58349"/>
        <dbReference type="ChEBI" id="CHEBI:65315"/>
        <dbReference type="ChEBI" id="CHEBI:74447"/>
        <dbReference type="EC" id="2.1.1.74"/>
    </reaction>
</comment>
<comment type="cofactor">
    <cofactor evidence="1">
        <name>FAD</name>
        <dbReference type="ChEBI" id="CHEBI:57692"/>
    </cofactor>
</comment>
<comment type="subcellular location">
    <subcellularLocation>
        <location evidence="1">Cytoplasm</location>
    </subcellularLocation>
</comment>
<comment type="similarity">
    <text evidence="1">Belongs to the MnmG family. TrmFO subfamily.</text>
</comment>
<evidence type="ECO:0000255" key="1">
    <source>
        <dbReference type="HAMAP-Rule" id="MF_01037"/>
    </source>
</evidence>
<feature type="chain" id="PRO_0000117264" description="Methylenetetrahydrofolate--tRNA-(uracil-5-)-methyltransferase TrmFO">
    <location>
        <begin position="1"/>
        <end position="435"/>
    </location>
</feature>
<feature type="binding site" evidence="1">
    <location>
        <begin position="9"/>
        <end position="14"/>
    </location>
    <ligand>
        <name>FAD</name>
        <dbReference type="ChEBI" id="CHEBI:57692"/>
    </ligand>
</feature>
<sequence length="435" mass="48371">MTQTVNVIGAGLAGSEAAYQLAERGIKVNLIEMRPVKQTPAHHTDKFAELVCSNSLRGNALTNGVGVLKEEMRRLNSIIIEAADKARVPAGGALAVDRHDFSGYITETLKNHENITVINEEINAIPDGYTIIATGPLTTETLAQEIVDITGKDQLYFYDAAAPIIEKESIDMDKVYLKSRYDKGEAAYLNCPMTEDEFNRFYDAVLEAEVAPVNSFEKEKYFEGCMPFEVMAERGRKTLLFGPMKPVGLEDPKTGKRPYAVVQLRQDDAAGTLYNIVGFQTHLKWGAQKEVIKLIPGLENVDIVRYGVMHRNTFINSPDVLNEKYELISQPNIQFAGQMTGVEGYVESAASGLVAGINLAHKILGKGEVVFPRETMIGSMAYYISHAKNNKNFQPMNANFGLLPSLETRIKDKKERYEAQANRALDYLENFKKTL</sequence>
<proteinExistence type="evidence at protein level"/>
<keyword id="KW-0963">Cytoplasm</keyword>
<keyword id="KW-0274">FAD</keyword>
<keyword id="KW-0285">Flavoprotein</keyword>
<keyword id="KW-0489">Methyltransferase</keyword>
<keyword id="KW-0520">NAD</keyword>
<keyword id="KW-0521">NADP</keyword>
<keyword id="KW-0808">Transferase</keyword>
<keyword id="KW-0819">tRNA processing</keyword>